<feature type="chain" id="PRO_1000139444" description="CTP synthase">
    <location>
        <begin position="1"/>
        <end position="545"/>
    </location>
</feature>
<feature type="domain" description="Glutamine amidotransferase type-1" evidence="1">
    <location>
        <begin position="291"/>
        <end position="542"/>
    </location>
</feature>
<feature type="region of interest" description="Amidoligase domain" evidence="1">
    <location>
        <begin position="1"/>
        <end position="266"/>
    </location>
</feature>
<feature type="active site" description="Nucleophile; for glutamine hydrolysis" evidence="1">
    <location>
        <position position="379"/>
    </location>
</feature>
<feature type="active site" evidence="1">
    <location>
        <position position="515"/>
    </location>
</feature>
<feature type="active site" evidence="1">
    <location>
        <position position="517"/>
    </location>
</feature>
<feature type="binding site" evidence="1">
    <location>
        <position position="14"/>
    </location>
    <ligand>
        <name>CTP</name>
        <dbReference type="ChEBI" id="CHEBI:37563"/>
        <note>allosteric inhibitor</note>
    </ligand>
</feature>
<feature type="binding site" evidence="1">
    <location>
        <position position="14"/>
    </location>
    <ligand>
        <name>UTP</name>
        <dbReference type="ChEBI" id="CHEBI:46398"/>
    </ligand>
</feature>
<feature type="binding site" evidence="1">
    <location>
        <begin position="15"/>
        <end position="20"/>
    </location>
    <ligand>
        <name>ATP</name>
        <dbReference type="ChEBI" id="CHEBI:30616"/>
    </ligand>
</feature>
<feature type="binding site" evidence="1">
    <location>
        <position position="72"/>
    </location>
    <ligand>
        <name>ATP</name>
        <dbReference type="ChEBI" id="CHEBI:30616"/>
    </ligand>
</feature>
<feature type="binding site" evidence="1">
    <location>
        <position position="72"/>
    </location>
    <ligand>
        <name>Mg(2+)</name>
        <dbReference type="ChEBI" id="CHEBI:18420"/>
    </ligand>
</feature>
<feature type="binding site" evidence="1">
    <location>
        <position position="140"/>
    </location>
    <ligand>
        <name>Mg(2+)</name>
        <dbReference type="ChEBI" id="CHEBI:18420"/>
    </ligand>
</feature>
<feature type="binding site" evidence="1">
    <location>
        <begin position="147"/>
        <end position="149"/>
    </location>
    <ligand>
        <name>CTP</name>
        <dbReference type="ChEBI" id="CHEBI:37563"/>
        <note>allosteric inhibitor</note>
    </ligand>
</feature>
<feature type="binding site" evidence="1">
    <location>
        <begin position="187"/>
        <end position="192"/>
    </location>
    <ligand>
        <name>CTP</name>
        <dbReference type="ChEBI" id="CHEBI:37563"/>
        <note>allosteric inhibitor</note>
    </ligand>
</feature>
<feature type="binding site" evidence="1">
    <location>
        <begin position="187"/>
        <end position="192"/>
    </location>
    <ligand>
        <name>UTP</name>
        <dbReference type="ChEBI" id="CHEBI:46398"/>
    </ligand>
</feature>
<feature type="binding site" evidence="1">
    <location>
        <position position="223"/>
    </location>
    <ligand>
        <name>CTP</name>
        <dbReference type="ChEBI" id="CHEBI:37563"/>
        <note>allosteric inhibitor</note>
    </ligand>
</feature>
<feature type="binding site" evidence="1">
    <location>
        <position position="223"/>
    </location>
    <ligand>
        <name>UTP</name>
        <dbReference type="ChEBI" id="CHEBI:46398"/>
    </ligand>
</feature>
<feature type="binding site" evidence="1">
    <location>
        <begin position="239"/>
        <end position="241"/>
    </location>
    <ligand>
        <name>ATP</name>
        <dbReference type="ChEBI" id="CHEBI:30616"/>
    </ligand>
</feature>
<feature type="binding site" evidence="1">
    <location>
        <position position="352"/>
    </location>
    <ligand>
        <name>L-glutamine</name>
        <dbReference type="ChEBI" id="CHEBI:58359"/>
    </ligand>
</feature>
<feature type="binding site" evidence="1">
    <location>
        <begin position="380"/>
        <end position="383"/>
    </location>
    <ligand>
        <name>L-glutamine</name>
        <dbReference type="ChEBI" id="CHEBI:58359"/>
    </ligand>
</feature>
<feature type="binding site" evidence="1">
    <location>
        <position position="403"/>
    </location>
    <ligand>
        <name>L-glutamine</name>
        <dbReference type="ChEBI" id="CHEBI:58359"/>
    </ligand>
</feature>
<feature type="binding site" evidence="1">
    <location>
        <position position="470"/>
    </location>
    <ligand>
        <name>L-glutamine</name>
        <dbReference type="ChEBI" id="CHEBI:58359"/>
    </ligand>
</feature>
<dbReference type="EC" id="6.3.4.2" evidence="1"/>
<dbReference type="EMBL" id="CP000948">
    <property type="protein sequence ID" value="ACB03894.1"/>
    <property type="molecule type" value="Genomic_DNA"/>
</dbReference>
<dbReference type="RefSeq" id="WP_000210878.1">
    <property type="nucleotide sequence ID" value="NC_010473.1"/>
</dbReference>
<dbReference type="SMR" id="B1XDJ0"/>
<dbReference type="MEROPS" id="C26.964"/>
<dbReference type="GeneID" id="93779218"/>
<dbReference type="KEGG" id="ecd:ECDH10B_2947"/>
<dbReference type="HOGENOM" id="CLU_011675_5_0_6"/>
<dbReference type="UniPathway" id="UPA00159">
    <property type="reaction ID" value="UER00277"/>
</dbReference>
<dbReference type="GO" id="GO:0005829">
    <property type="term" value="C:cytosol"/>
    <property type="evidence" value="ECO:0007669"/>
    <property type="project" value="TreeGrafter"/>
</dbReference>
<dbReference type="GO" id="GO:0005524">
    <property type="term" value="F:ATP binding"/>
    <property type="evidence" value="ECO:0007669"/>
    <property type="project" value="UniProtKB-KW"/>
</dbReference>
<dbReference type="GO" id="GO:0003883">
    <property type="term" value="F:CTP synthase activity"/>
    <property type="evidence" value="ECO:0007669"/>
    <property type="project" value="UniProtKB-UniRule"/>
</dbReference>
<dbReference type="GO" id="GO:0004359">
    <property type="term" value="F:glutaminase activity"/>
    <property type="evidence" value="ECO:0007669"/>
    <property type="project" value="RHEA"/>
</dbReference>
<dbReference type="GO" id="GO:0042802">
    <property type="term" value="F:identical protein binding"/>
    <property type="evidence" value="ECO:0007669"/>
    <property type="project" value="TreeGrafter"/>
</dbReference>
<dbReference type="GO" id="GO:0046872">
    <property type="term" value="F:metal ion binding"/>
    <property type="evidence" value="ECO:0007669"/>
    <property type="project" value="UniProtKB-KW"/>
</dbReference>
<dbReference type="GO" id="GO:0044210">
    <property type="term" value="P:'de novo' CTP biosynthetic process"/>
    <property type="evidence" value="ECO:0007669"/>
    <property type="project" value="UniProtKB-UniRule"/>
</dbReference>
<dbReference type="GO" id="GO:0019856">
    <property type="term" value="P:pyrimidine nucleobase biosynthetic process"/>
    <property type="evidence" value="ECO:0007669"/>
    <property type="project" value="TreeGrafter"/>
</dbReference>
<dbReference type="CDD" id="cd03113">
    <property type="entry name" value="CTPS_N"/>
    <property type="match status" value="1"/>
</dbReference>
<dbReference type="CDD" id="cd01746">
    <property type="entry name" value="GATase1_CTP_Synthase"/>
    <property type="match status" value="1"/>
</dbReference>
<dbReference type="FunFam" id="3.40.50.300:FF:000009">
    <property type="entry name" value="CTP synthase"/>
    <property type="match status" value="1"/>
</dbReference>
<dbReference type="FunFam" id="3.40.50.880:FF:000002">
    <property type="entry name" value="CTP synthase"/>
    <property type="match status" value="1"/>
</dbReference>
<dbReference type="Gene3D" id="3.40.50.880">
    <property type="match status" value="1"/>
</dbReference>
<dbReference type="Gene3D" id="3.40.50.300">
    <property type="entry name" value="P-loop containing nucleotide triphosphate hydrolases"/>
    <property type="match status" value="1"/>
</dbReference>
<dbReference type="HAMAP" id="MF_01227">
    <property type="entry name" value="PyrG"/>
    <property type="match status" value="1"/>
</dbReference>
<dbReference type="InterPro" id="IPR029062">
    <property type="entry name" value="Class_I_gatase-like"/>
</dbReference>
<dbReference type="InterPro" id="IPR004468">
    <property type="entry name" value="CTP_synthase"/>
</dbReference>
<dbReference type="InterPro" id="IPR017456">
    <property type="entry name" value="CTP_synthase_N"/>
</dbReference>
<dbReference type="InterPro" id="IPR017926">
    <property type="entry name" value="GATASE"/>
</dbReference>
<dbReference type="InterPro" id="IPR033828">
    <property type="entry name" value="GATase1_CTP_Synthase"/>
</dbReference>
<dbReference type="InterPro" id="IPR027417">
    <property type="entry name" value="P-loop_NTPase"/>
</dbReference>
<dbReference type="NCBIfam" id="NF003792">
    <property type="entry name" value="PRK05380.1"/>
    <property type="match status" value="1"/>
</dbReference>
<dbReference type="NCBIfam" id="TIGR00337">
    <property type="entry name" value="PyrG"/>
    <property type="match status" value="1"/>
</dbReference>
<dbReference type="PANTHER" id="PTHR11550">
    <property type="entry name" value="CTP SYNTHASE"/>
    <property type="match status" value="1"/>
</dbReference>
<dbReference type="PANTHER" id="PTHR11550:SF0">
    <property type="entry name" value="CTP SYNTHASE-RELATED"/>
    <property type="match status" value="1"/>
</dbReference>
<dbReference type="Pfam" id="PF06418">
    <property type="entry name" value="CTP_synth_N"/>
    <property type="match status" value="1"/>
</dbReference>
<dbReference type="Pfam" id="PF00117">
    <property type="entry name" value="GATase"/>
    <property type="match status" value="1"/>
</dbReference>
<dbReference type="SUPFAM" id="SSF52317">
    <property type="entry name" value="Class I glutamine amidotransferase-like"/>
    <property type="match status" value="1"/>
</dbReference>
<dbReference type="SUPFAM" id="SSF52540">
    <property type="entry name" value="P-loop containing nucleoside triphosphate hydrolases"/>
    <property type="match status" value="1"/>
</dbReference>
<dbReference type="PROSITE" id="PS51273">
    <property type="entry name" value="GATASE_TYPE_1"/>
    <property type="match status" value="1"/>
</dbReference>
<keyword id="KW-0067">ATP-binding</keyword>
<keyword id="KW-0315">Glutamine amidotransferase</keyword>
<keyword id="KW-0436">Ligase</keyword>
<keyword id="KW-0460">Magnesium</keyword>
<keyword id="KW-0479">Metal-binding</keyword>
<keyword id="KW-0547">Nucleotide-binding</keyword>
<keyword id="KW-0665">Pyrimidine biosynthesis</keyword>
<accession>B1XDJ0</accession>
<sequence>MTTNYIFVTGGVVSSLGKGIAAASLAAILEARGLNVTIMKLDPYINVDPGTMSPIQHGEVFVTEDGAETDLDLGHYERFIRTKMSRRNNFTTGRIYSDVLRKERRGDYLGATVQVIPHITNAIKERVLEGGEGHDVVLVEIGGTVGDIESLPFLEAIRQMAVEIGREHTLFMHLTLVPYMAASGEVKTKPTQHSVKELLSIGIQPDILICRSDRAVPANERAKIALFCNVPEKAVISLKDVDSIYKIPGLLKSQGLDDYICKRFSLNCPEANLSEWEQVIFEEANPVSEVTIGMVGKYIELPDAYKSVIEALKHGGLKNRVSVNIKLIDSQDVETRGVEILKGLDAILVPGGFGYRGVEGMITTARFARENNIPYLGICLGMQVALIDYARHVANMENANSTEFVPDCKYPVVALITEWRDENGNVEVRSEKSDLGGTMRLGAQQCQLVDDSLVRQLYNAPTIVERHRHRYEVNNMLLKQIEDAGLRVAGRSGDDQLVEIIEVPNHPWFVACQFHPEFTSTPRDGHPLFAGFVKAASEFQKRQAK</sequence>
<reference key="1">
    <citation type="journal article" date="2008" name="J. Bacteriol.">
        <title>The complete genome sequence of Escherichia coli DH10B: insights into the biology of a laboratory workhorse.</title>
        <authorList>
            <person name="Durfee T."/>
            <person name="Nelson R."/>
            <person name="Baldwin S."/>
            <person name="Plunkett G. III"/>
            <person name="Burland V."/>
            <person name="Mau B."/>
            <person name="Petrosino J.F."/>
            <person name="Qin X."/>
            <person name="Muzny D.M."/>
            <person name="Ayele M."/>
            <person name="Gibbs R.A."/>
            <person name="Csorgo B."/>
            <person name="Posfai G."/>
            <person name="Weinstock G.M."/>
            <person name="Blattner F.R."/>
        </authorList>
    </citation>
    <scope>NUCLEOTIDE SEQUENCE [LARGE SCALE GENOMIC DNA]</scope>
    <source>
        <strain>K12 / DH10B</strain>
    </source>
</reference>
<name>PYRG_ECODH</name>
<comment type="function">
    <text evidence="1">Catalyzes the ATP-dependent amination of UTP to CTP with either L-glutamine or ammonia as the source of nitrogen. Regulates intracellular CTP levels through interactions with the four ribonucleotide triphosphates.</text>
</comment>
<comment type="catalytic activity">
    <reaction evidence="1">
        <text>UTP + L-glutamine + ATP + H2O = CTP + L-glutamate + ADP + phosphate + 2 H(+)</text>
        <dbReference type="Rhea" id="RHEA:26426"/>
        <dbReference type="ChEBI" id="CHEBI:15377"/>
        <dbReference type="ChEBI" id="CHEBI:15378"/>
        <dbReference type="ChEBI" id="CHEBI:29985"/>
        <dbReference type="ChEBI" id="CHEBI:30616"/>
        <dbReference type="ChEBI" id="CHEBI:37563"/>
        <dbReference type="ChEBI" id="CHEBI:43474"/>
        <dbReference type="ChEBI" id="CHEBI:46398"/>
        <dbReference type="ChEBI" id="CHEBI:58359"/>
        <dbReference type="ChEBI" id="CHEBI:456216"/>
        <dbReference type="EC" id="6.3.4.2"/>
    </reaction>
</comment>
<comment type="catalytic activity">
    <reaction evidence="1">
        <text>L-glutamine + H2O = L-glutamate + NH4(+)</text>
        <dbReference type="Rhea" id="RHEA:15889"/>
        <dbReference type="ChEBI" id="CHEBI:15377"/>
        <dbReference type="ChEBI" id="CHEBI:28938"/>
        <dbReference type="ChEBI" id="CHEBI:29985"/>
        <dbReference type="ChEBI" id="CHEBI:58359"/>
    </reaction>
</comment>
<comment type="catalytic activity">
    <reaction evidence="1">
        <text>UTP + NH4(+) + ATP = CTP + ADP + phosphate + 2 H(+)</text>
        <dbReference type="Rhea" id="RHEA:16597"/>
        <dbReference type="ChEBI" id="CHEBI:15378"/>
        <dbReference type="ChEBI" id="CHEBI:28938"/>
        <dbReference type="ChEBI" id="CHEBI:30616"/>
        <dbReference type="ChEBI" id="CHEBI:37563"/>
        <dbReference type="ChEBI" id="CHEBI:43474"/>
        <dbReference type="ChEBI" id="CHEBI:46398"/>
        <dbReference type="ChEBI" id="CHEBI:456216"/>
    </reaction>
</comment>
<comment type="activity regulation">
    <text evidence="1">Allosterically activated by GTP, when glutamine is the substrate; GTP has no effect on the reaction when ammonia is the substrate. The allosteric effector GTP functions by stabilizing the protein conformation that binds the tetrahedral intermediate(s) formed during glutamine hydrolysis. Inhibited by the product CTP, via allosteric rather than competitive inhibition.</text>
</comment>
<comment type="pathway">
    <text evidence="1">Pyrimidine metabolism; CTP biosynthesis via de novo pathway; CTP from UDP: step 2/2.</text>
</comment>
<comment type="subunit">
    <text evidence="1">Homotetramer.</text>
</comment>
<comment type="miscellaneous">
    <text evidence="1">CTPSs have evolved a hybrid strategy for distinguishing between UTP and CTP. The overlapping regions of the product feedback inhibitory and substrate sites recognize a common feature in both compounds, the triphosphate moiety. To differentiate isosteric substrate and product pyrimidine rings, an additional pocket far from the expected kinase/ligase catalytic site, specifically recognizes the cytosine and ribose portions of the product inhibitor.</text>
</comment>
<comment type="similarity">
    <text evidence="1">Belongs to the CTP synthase family.</text>
</comment>
<proteinExistence type="inferred from homology"/>
<protein>
    <recommendedName>
        <fullName evidence="1">CTP synthase</fullName>
        <ecNumber evidence="1">6.3.4.2</ecNumber>
    </recommendedName>
    <alternativeName>
        <fullName evidence="1">Cytidine 5'-triphosphate synthase</fullName>
    </alternativeName>
    <alternativeName>
        <fullName evidence="1">Cytidine triphosphate synthetase</fullName>
        <shortName evidence="1">CTP synthetase</shortName>
        <shortName evidence="1">CTPS</shortName>
    </alternativeName>
    <alternativeName>
        <fullName evidence="1">UTP--ammonia ligase</fullName>
    </alternativeName>
</protein>
<evidence type="ECO:0000255" key="1">
    <source>
        <dbReference type="HAMAP-Rule" id="MF_01227"/>
    </source>
</evidence>
<organism>
    <name type="scientific">Escherichia coli (strain K12 / DH10B)</name>
    <dbReference type="NCBI Taxonomy" id="316385"/>
    <lineage>
        <taxon>Bacteria</taxon>
        <taxon>Pseudomonadati</taxon>
        <taxon>Pseudomonadota</taxon>
        <taxon>Gammaproteobacteria</taxon>
        <taxon>Enterobacterales</taxon>
        <taxon>Enterobacteriaceae</taxon>
        <taxon>Escherichia</taxon>
    </lineage>
</organism>
<gene>
    <name evidence="1" type="primary">pyrG</name>
    <name type="ordered locus">ECDH10B_2947</name>
</gene>